<protein>
    <recommendedName>
        <fullName evidence="1">Small ribosomal subunit protein bS21</fullName>
    </recommendedName>
    <alternativeName>
        <fullName evidence="3">30S ribosomal protein S21</fullName>
    </alternativeName>
</protein>
<proteinExistence type="inferred from homology"/>
<accession>Q21MU8</accession>
<feature type="chain" id="PRO_0000266756" description="Small ribosomal subunit protein bS21">
    <location>
        <begin position="1"/>
        <end position="71"/>
    </location>
</feature>
<feature type="region of interest" description="Disordered" evidence="2">
    <location>
        <begin position="48"/>
        <end position="71"/>
    </location>
</feature>
<feature type="compositionally biased region" description="Basic residues" evidence="2">
    <location>
        <begin position="48"/>
        <end position="59"/>
    </location>
</feature>
<feature type="compositionally biased region" description="Basic and acidic residues" evidence="2">
    <location>
        <begin position="60"/>
        <end position="71"/>
    </location>
</feature>
<dbReference type="EMBL" id="CP000282">
    <property type="protein sequence ID" value="ABD79981.1"/>
    <property type="molecule type" value="Genomic_DNA"/>
</dbReference>
<dbReference type="RefSeq" id="WP_011467202.1">
    <property type="nucleotide sequence ID" value="NC_007912.1"/>
</dbReference>
<dbReference type="SMR" id="Q21MU8"/>
<dbReference type="STRING" id="203122.Sde_0719"/>
<dbReference type="GeneID" id="98612404"/>
<dbReference type="KEGG" id="sde:Sde_0719"/>
<dbReference type="eggNOG" id="COG0828">
    <property type="taxonomic scope" value="Bacteria"/>
</dbReference>
<dbReference type="HOGENOM" id="CLU_159258_1_0_6"/>
<dbReference type="OrthoDB" id="9799244at2"/>
<dbReference type="Proteomes" id="UP000001947">
    <property type="component" value="Chromosome"/>
</dbReference>
<dbReference type="GO" id="GO:1990904">
    <property type="term" value="C:ribonucleoprotein complex"/>
    <property type="evidence" value="ECO:0007669"/>
    <property type="project" value="UniProtKB-KW"/>
</dbReference>
<dbReference type="GO" id="GO:0005840">
    <property type="term" value="C:ribosome"/>
    <property type="evidence" value="ECO:0007669"/>
    <property type="project" value="UniProtKB-KW"/>
</dbReference>
<dbReference type="GO" id="GO:0003735">
    <property type="term" value="F:structural constituent of ribosome"/>
    <property type="evidence" value="ECO:0007669"/>
    <property type="project" value="InterPro"/>
</dbReference>
<dbReference type="GO" id="GO:0006412">
    <property type="term" value="P:translation"/>
    <property type="evidence" value="ECO:0007669"/>
    <property type="project" value="UniProtKB-UniRule"/>
</dbReference>
<dbReference type="Gene3D" id="1.20.5.1150">
    <property type="entry name" value="Ribosomal protein S8"/>
    <property type="match status" value="1"/>
</dbReference>
<dbReference type="HAMAP" id="MF_00358">
    <property type="entry name" value="Ribosomal_bS21"/>
    <property type="match status" value="1"/>
</dbReference>
<dbReference type="InterPro" id="IPR001911">
    <property type="entry name" value="Ribosomal_bS21"/>
</dbReference>
<dbReference type="InterPro" id="IPR018278">
    <property type="entry name" value="Ribosomal_bS21_CS"/>
</dbReference>
<dbReference type="InterPro" id="IPR038380">
    <property type="entry name" value="Ribosomal_bS21_sf"/>
</dbReference>
<dbReference type="NCBIfam" id="TIGR00030">
    <property type="entry name" value="S21p"/>
    <property type="match status" value="1"/>
</dbReference>
<dbReference type="PANTHER" id="PTHR21109">
    <property type="entry name" value="MITOCHONDRIAL 28S RIBOSOMAL PROTEIN S21"/>
    <property type="match status" value="1"/>
</dbReference>
<dbReference type="PANTHER" id="PTHR21109:SF22">
    <property type="entry name" value="SMALL RIBOSOMAL SUBUNIT PROTEIN BS21"/>
    <property type="match status" value="1"/>
</dbReference>
<dbReference type="Pfam" id="PF01165">
    <property type="entry name" value="Ribosomal_S21"/>
    <property type="match status" value="1"/>
</dbReference>
<dbReference type="PRINTS" id="PR00976">
    <property type="entry name" value="RIBOSOMALS21"/>
</dbReference>
<dbReference type="PROSITE" id="PS01181">
    <property type="entry name" value="RIBOSOMAL_S21"/>
    <property type="match status" value="1"/>
</dbReference>
<organism>
    <name type="scientific">Saccharophagus degradans (strain 2-40 / ATCC 43961 / DSM 17024)</name>
    <dbReference type="NCBI Taxonomy" id="203122"/>
    <lineage>
        <taxon>Bacteria</taxon>
        <taxon>Pseudomonadati</taxon>
        <taxon>Pseudomonadota</taxon>
        <taxon>Gammaproteobacteria</taxon>
        <taxon>Cellvibrionales</taxon>
        <taxon>Cellvibrionaceae</taxon>
        <taxon>Saccharophagus</taxon>
    </lineage>
</organism>
<evidence type="ECO:0000255" key="1">
    <source>
        <dbReference type="HAMAP-Rule" id="MF_00358"/>
    </source>
</evidence>
<evidence type="ECO:0000256" key="2">
    <source>
        <dbReference type="SAM" id="MobiDB-lite"/>
    </source>
</evidence>
<evidence type="ECO:0000305" key="3"/>
<reference key="1">
    <citation type="journal article" date="2008" name="PLoS Genet.">
        <title>Complete genome sequence of the complex carbohydrate-degrading marine bacterium, Saccharophagus degradans strain 2-40 T.</title>
        <authorList>
            <person name="Weiner R.M."/>
            <person name="Taylor L.E. II"/>
            <person name="Henrissat B."/>
            <person name="Hauser L."/>
            <person name="Land M."/>
            <person name="Coutinho P.M."/>
            <person name="Rancurel C."/>
            <person name="Saunders E.H."/>
            <person name="Longmire A.G."/>
            <person name="Zhang H."/>
            <person name="Bayer E.A."/>
            <person name="Gilbert H.J."/>
            <person name="Larimer F."/>
            <person name="Zhulin I.B."/>
            <person name="Ekborg N.A."/>
            <person name="Lamed R."/>
            <person name="Richardson P.M."/>
            <person name="Borovok I."/>
            <person name="Hutcheson S."/>
        </authorList>
    </citation>
    <scope>NUCLEOTIDE SEQUENCE [LARGE SCALE GENOMIC DNA]</scope>
    <source>
        <strain>2-40 / ATCC 43961 / DSM 17024</strain>
    </source>
</reference>
<sequence>MPSVKLKENEPFDVALRRFKRSCEKAGVLAEVRRREFYEKPTSVRKRKAAAAVKRHAKKVQRENRKFQRLY</sequence>
<gene>
    <name evidence="1" type="primary">rpsU</name>
    <name type="ordered locus">Sde_0719</name>
</gene>
<name>RS21_SACD2</name>
<comment type="similarity">
    <text evidence="1">Belongs to the bacterial ribosomal protein bS21 family.</text>
</comment>
<keyword id="KW-1185">Reference proteome</keyword>
<keyword id="KW-0687">Ribonucleoprotein</keyword>
<keyword id="KW-0689">Ribosomal protein</keyword>